<feature type="chain" id="PRO_5000506699" description="ATP-dependent zinc metalloprotease FtsH">
    <location>
        <begin position="1"/>
        <end position="660"/>
    </location>
</feature>
<feature type="topological domain" description="Cytoplasmic" evidence="1">
    <location>
        <begin position="1"/>
        <end position="24"/>
    </location>
</feature>
<feature type="transmembrane region" description="Helical" evidence="1">
    <location>
        <begin position="25"/>
        <end position="45"/>
    </location>
</feature>
<feature type="topological domain" description="Extracellular" evidence="1">
    <location>
        <begin position="46"/>
        <end position="118"/>
    </location>
</feature>
<feature type="transmembrane region" description="Helical" evidence="1">
    <location>
        <begin position="119"/>
        <end position="139"/>
    </location>
</feature>
<feature type="topological domain" description="Cytoplasmic" evidence="1">
    <location>
        <begin position="140"/>
        <end position="660"/>
    </location>
</feature>
<feature type="region of interest" description="Disordered" evidence="2">
    <location>
        <begin position="1"/>
        <end position="20"/>
    </location>
</feature>
<feature type="active site" evidence="1">
    <location>
        <position position="436"/>
    </location>
</feature>
<feature type="binding site" evidence="1">
    <location>
        <begin position="213"/>
        <end position="220"/>
    </location>
    <ligand>
        <name>ATP</name>
        <dbReference type="ChEBI" id="CHEBI:30616"/>
    </ligand>
</feature>
<feature type="binding site" evidence="1">
    <location>
        <position position="435"/>
    </location>
    <ligand>
        <name>Zn(2+)</name>
        <dbReference type="ChEBI" id="CHEBI:29105"/>
        <note>catalytic</note>
    </ligand>
</feature>
<feature type="binding site" evidence="1">
    <location>
        <position position="439"/>
    </location>
    <ligand>
        <name>Zn(2+)</name>
        <dbReference type="ChEBI" id="CHEBI:29105"/>
        <note>catalytic</note>
    </ligand>
</feature>
<feature type="binding site" evidence="1">
    <location>
        <position position="511"/>
    </location>
    <ligand>
        <name>Zn(2+)</name>
        <dbReference type="ChEBI" id="CHEBI:29105"/>
        <note>catalytic</note>
    </ligand>
</feature>
<reference key="1">
    <citation type="journal article" date="2009" name="Stand. Genomic Sci.">
        <title>Complete genome sequence of Acidimicrobium ferrooxidans type strain (ICP).</title>
        <authorList>
            <person name="Clum A."/>
            <person name="Nolan M."/>
            <person name="Lang E."/>
            <person name="Glavina Del Rio T."/>
            <person name="Tice H."/>
            <person name="Copeland A."/>
            <person name="Cheng J.F."/>
            <person name="Lucas S."/>
            <person name="Chen F."/>
            <person name="Bruce D."/>
            <person name="Goodwin L."/>
            <person name="Pitluck S."/>
            <person name="Ivanova N."/>
            <person name="Mavrommatis K."/>
            <person name="Mikhailova N."/>
            <person name="Pati A."/>
            <person name="Chen A."/>
            <person name="Palaniappan K."/>
            <person name="Goker M."/>
            <person name="Spring S."/>
            <person name="Land M."/>
            <person name="Hauser L."/>
            <person name="Chang Y.J."/>
            <person name="Jeffries C.C."/>
            <person name="Chain P."/>
            <person name="Bristow J."/>
            <person name="Eisen J.A."/>
            <person name="Markowitz V."/>
            <person name="Hugenholtz P."/>
            <person name="Kyrpides N.C."/>
            <person name="Klenk H.P."/>
            <person name="Lapidus A."/>
        </authorList>
    </citation>
    <scope>NUCLEOTIDE SEQUENCE [LARGE SCALE GENOMIC DNA]</scope>
    <source>
        <strain>DSM 10331 / JCM 15462 / NBRC 103882 / ICP</strain>
    </source>
</reference>
<dbReference type="EC" id="3.4.24.-" evidence="1"/>
<dbReference type="EMBL" id="CP001631">
    <property type="protein sequence ID" value="ACU54528.1"/>
    <property type="molecule type" value="Genomic_DNA"/>
</dbReference>
<dbReference type="RefSeq" id="WP_015799007.1">
    <property type="nucleotide sequence ID" value="NC_013124.1"/>
</dbReference>
<dbReference type="SMR" id="C7M0M0"/>
<dbReference type="STRING" id="525909.Afer_1606"/>
<dbReference type="KEGG" id="afo:Afer_1606"/>
<dbReference type="eggNOG" id="COG0465">
    <property type="taxonomic scope" value="Bacteria"/>
</dbReference>
<dbReference type="HOGENOM" id="CLU_000688_16_2_11"/>
<dbReference type="OrthoDB" id="9809379at2"/>
<dbReference type="Proteomes" id="UP000000771">
    <property type="component" value="Chromosome"/>
</dbReference>
<dbReference type="GO" id="GO:0005886">
    <property type="term" value="C:plasma membrane"/>
    <property type="evidence" value="ECO:0007669"/>
    <property type="project" value="UniProtKB-SubCell"/>
</dbReference>
<dbReference type="GO" id="GO:0005524">
    <property type="term" value="F:ATP binding"/>
    <property type="evidence" value="ECO:0007669"/>
    <property type="project" value="UniProtKB-UniRule"/>
</dbReference>
<dbReference type="GO" id="GO:0016887">
    <property type="term" value="F:ATP hydrolysis activity"/>
    <property type="evidence" value="ECO:0007669"/>
    <property type="project" value="UniProtKB-UniRule"/>
</dbReference>
<dbReference type="GO" id="GO:0004176">
    <property type="term" value="F:ATP-dependent peptidase activity"/>
    <property type="evidence" value="ECO:0007669"/>
    <property type="project" value="InterPro"/>
</dbReference>
<dbReference type="GO" id="GO:0004222">
    <property type="term" value="F:metalloendopeptidase activity"/>
    <property type="evidence" value="ECO:0007669"/>
    <property type="project" value="InterPro"/>
</dbReference>
<dbReference type="GO" id="GO:0008270">
    <property type="term" value="F:zinc ion binding"/>
    <property type="evidence" value="ECO:0007669"/>
    <property type="project" value="UniProtKB-UniRule"/>
</dbReference>
<dbReference type="GO" id="GO:0030163">
    <property type="term" value="P:protein catabolic process"/>
    <property type="evidence" value="ECO:0007669"/>
    <property type="project" value="UniProtKB-UniRule"/>
</dbReference>
<dbReference type="GO" id="GO:0006508">
    <property type="term" value="P:proteolysis"/>
    <property type="evidence" value="ECO:0007669"/>
    <property type="project" value="UniProtKB-KW"/>
</dbReference>
<dbReference type="CDD" id="cd19501">
    <property type="entry name" value="RecA-like_FtsH"/>
    <property type="match status" value="1"/>
</dbReference>
<dbReference type="FunFam" id="1.10.8.60:FF:000001">
    <property type="entry name" value="ATP-dependent zinc metalloprotease FtsH"/>
    <property type="match status" value="1"/>
</dbReference>
<dbReference type="FunFam" id="1.20.58.760:FF:000001">
    <property type="entry name" value="ATP-dependent zinc metalloprotease FtsH"/>
    <property type="match status" value="1"/>
</dbReference>
<dbReference type="FunFam" id="3.40.50.300:FF:000001">
    <property type="entry name" value="ATP-dependent zinc metalloprotease FtsH"/>
    <property type="match status" value="1"/>
</dbReference>
<dbReference type="Gene3D" id="1.10.8.60">
    <property type="match status" value="1"/>
</dbReference>
<dbReference type="Gene3D" id="3.30.720.210">
    <property type="match status" value="1"/>
</dbReference>
<dbReference type="Gene3D" id="3.40.50.300">
    <property type="entry name" value="P-loop containing nucleotide triphosphate hydrolases"/>
    <property type="match status" value="1"/>
</dbReference>
<dbReference type="Gene3D" id="1.20.58.760">
    <property type="entry name" value="Peptidase M41"/>
    <property type="match status" value="1"/>
</dbReference>
<dbReference type="HAMAP" id="MF_01458">
    <property type="entry name" value="FtsH"/>
    <property type="match status" value="1"/>
</dbReference>
<dbReference type="InterPro" id="IPR003593">
    <property type="entry name" value="AAA+_ATPase"/>
</dbReference>
<dbReference type="InterPro" id="IPR041569">
    <property type="entry name" value="AAA_lid_3"/>
</dbReference>
<dbReference type="InterPro" id="IPR003959">
    <property type="entry name" value="ATPase_AAA_core"/>
</dbReference>
<dbReference type="InterPro" id="IPR003960">
    <property type="entry name" value="ATPase_AAA_CS"/>
</dbReference>
<dbReference type="InterPro" id="IPR005936">
    <property type="entry name" value="FtsH"/>
</dbReference>
<dbReference type="InterPro" id="IPR027417">
    <property type="entry name" value="P-loop_NTPase"/>
</dbReference>
<dbReference type="InterPro" id="IPR011546">
    <property type="entry name" value="Pept_M41_FtsH_extracell"/>
</dbReference>
<dbReference type="InterPro" id="IPR000642">
    <property type="entry name" value="Peptidase_M41"/>
</dbReference>
<dbReference type="InterPro" id="IPR037219">
    <property type="entry name" value="Peptidase_M41-like"/>
</dbReference>
<dbReference type="NCBIfam" id="TIGR01241">
    <property type="entry name" value="FtsH_fam"/>
    <property type="match status" value="1"/>
</dbReference>
<dbReference type="PANTHER" id="PTHR23076:SF97">
    <property type="entry name" value="ATP-DEPENDENT ZINC METALLOPROTEASE YME1L1"/>
    <property type="match status" value="1"/>
</dbReference>
<dbReference type="PANTHER" id="PTHR23076">
    <property type="entry name" value="METALLOPROTEASE M41 FTSH"/>
    <property type="match status" value="1"/>
</dbReference>
<dbReference type="Pfam" id="PF00004">
    <property type="entry name" value="AAA"/>
    <property type="match status" value="1"/>
</dbReference>
<dbReference type="Pfam" id="PF17862">
    <property type="entry name" value="AAA_lid_3"/>
    <property type="match status" value="1"/>
</dbReference>
<dbReference type="Pfam" id="PF06480">
    <property type="entry name" value="FtsH_ext"/>
    <property type="match status" value="1"/>
</dbReference>
<dbReference type="Pfam" id="PF01434">
    <property type="entry name" value="Peptidase_M41"/>
    <property type="match status" value="1"/>
</dbReference>
<dbReference type="SMART" id="SM00382">
    <property type="entry name" value="AAA"/>
    <property type="match status" value="1"/>
</dbReference>
<dbReference type="SUPFAM" id="SSF140990">
    <property type="entry name" value="FtsH protease domain-like"/>
    <property type="match status" value="1"/>
</dbReference>
<dbReference type="SUPFAM" id="SSF52540">
    <property type="entry name" value="P-loop containing nucleoside triphosphate hydrolases"/>
    <property type="match status" value="1"/>
</dbReference>
<dbReference type="PROSITE" id="PS00674">
    <property type="entry name" value="AAA"/>
    <property type="match status" value="1"/>
</dbReference>
<organism>
    <name type="scientific">Acidimicrobium ferrooxidans (strain DSM 10331 / JCM 15462 / NBRC 103882 / ICP)</name>
    <dbReference type="NCBI Taxonomy" id="525909"/>
    <lineage>
        <taxon>Bacteria</taxon>
        <taxon>Bacillati</taxon>
        <taxon>Actinomycetota</taxon>
        <taxon>Acidimicrobiia</taxon>
        <taxon>Acidimicrobiales</taxon>
        <taxon>Acidimicrobiaceae</taxon>
        <taxon>Acidimicrobium</taxon>
    </lineage>
</organism>
<proteinExistence type="inferred from homology"/>
<keyword id="KW-0067">ATP-binding</keyword>
<keyword id="KW-1003">Cell membrane</keyword>
<keyword id="KW-0378">Hydrolase</keyword>
<keyword id="KW-0472">Membrane</keyword>
<keyword id="KW-0479">Metal-binding</keyword>
<keyword id="KW-0482">Metalloprotease</keyword>
<keyword id="KW-0547">Nucleotide-binding</keyword>
<keyword id="KW-0645">Protease</keyword>
<keyword id="KW-1185">Reference proteome</keyword>
<keyword id="KW-0812">Transmembrane</keyword>
<keyword id="KW-1133">Transmembrane helix</keyword>
<keyword id="KW-0862">Zinc</keyword>
<comment type="function">
    <text evidence="1">Acts as a processive, ATP-dependent zinc metallopeptidase for both cytoplasmic and membrane proteins. Plays a role in the quality control of integral membrane proteins.</text>
</comment>
<comment type="cofactor">
    <cofactor evidence="1">
        <name>Zn(2+)</name>
        <dbReference type="ChEBI" id="CHEBI:29105"/>
    </cofactor>
    <text evidence="1">Binds 1 zinc ion per subunit.</text>
</comment>
<comment type="subunit">
    <text evidence="1">Homohexamer.</text>
</comment>
<comment type="subcellular location">
    <subcellularLocation>
        <location evidence="1">Cell membrane</location>
        <topology evidence="1">Multi-pass membrane protein</topology>
        <orientation evidence="1">Cytoplasmic side</orientation>
    </subcellularLocation>
</comment>
<comment type="similarity">
    <text evidence="1">In the central section; belongs to the AAA ATPase family.</text>
</comment>
<comment type="similarity">
    <text evidence="1">In the C-terminal section; belongs to the peptidase M41 family.</text>
</comment>
<accession>C7M0M0</accession>
<protein>
    <recommendedName>
        <fullName evidence="1">ATP-dependent zinc metalloprotease FtsH</fullName>
        <ecNumber evidence="1">3.4.24.-</ecNumber>
    </recommendedName>
</protein>
<name>FTSH_ACIFD</name>
<evidence type="ECO:0000255" key="1">
    <source>
        <dbReference type="HAMAP-Rule" id="MF_01458"/>
    </source>
</evidence>
<evidence type="ECO:0000256" key="2">
    <source>
        <dbReference type="SAM" id="MobiDB-lite"/>
    </source>
</evidence>
<sequence length="660" mass="71888">MMPSSQRPSPRGSRQSPSPDQRGRIAFAILATLVVAVLLLTLFSHAPSGQPLGYSTFIHDVQAKQVRTAVLNNTTGQITGSLTNGTAYSVTGPLPYTSSELSTLSKAHVQVSYITPGPGIASTIIEYVIFFGIFIGIWVYLTRRTQGSVNGIMSVGRSRAKTYTTERPKTTFDDVAGYQGVKGEVKEVVDFLRDPSRFSQLGARIPKGILLVGPPGTGKTLLARAVAGEAGVPFMSVSGSDFMEMFVGVGAARVRDLFQTARRQSPSIIFIDEIDSIGRKRGTGLGGGHDEREQTLNQMLSEMDGFDPAEGIVVMAATNRPDILDPALLRPGRFDRQIVVPLPDLPERLAILQVHTRGKRLAPDVDLEVMAKGTPGMSGADLANLVNEAALNAVRRGATDIAMADFDSARDRIIMGQRREATILSDEEKERVAFHEGGHAVLAYVLDYSDPVHKVTILPTGMALGVTQQLPERDRHLYPREYIEDTLVVRMGGRVAELLVYGDLSTGAANDLQGNTELARRMVREWGMSERLGPMAWGSQNVVFLGEDLLHSAEYSDRTARLVDEEVERILREQEERATELLRQHLPGLIAVAHALLERETISGEEVGRLVDEAAGHPIHPDGKRVLPIAKLPEYAELEQFTVTNGNNHAASHDDTDPVS</sequence>
<gene>
    <name evidence="1" type="primary">ftsH</name>
    <name type="ordered locus">Afer_1606</name>
</gene>